<name>LSRD_PHOLU</name>
<reference key="1">
    <citation type="journal article" date="2006" name="J. Bacteriol.">
        <title>Whole-genome comparison between Photorhabdus strains to identify genomic regions involved in the specificity of nematode interaction.</title>
        <authorList>
            <person name="Gaudriault S."/>
            <person name="Duchaud E."/>
            <person name="Lanois A."/>
            <person name="Canoy A.-S."/>
            <person name="Bourot S."/>
            <person name="DeRose R."/>
            <person name="Kunst F."/>
            <person name="Boemare N."/>
            <person name="Givaudan A."/>
        </authorList>
    </citation>
    <scope>NUCLEOTIDE SEQUENCE [GENOMIC DNA]</scope>
    <source>
        <strain>ATCC 29999 / DSM 3368 / BCRC 14801 / CCM 7077 / CIP 106429 / NCIMB 12670 / Hb</strain>
    </source>
</reference>
<proteinExistence type="inferred from homology"/>
<sequence length="333" mass="34966">MNIGQRYGWEFTLAALLIIEILLFGIANSRMLDINILLLSTSDFICIGIVALPLTMVIVSGGIDISFGSTIGLCAISLGVMNQAGIPMAAAIPLTLLVGAICGVINAALILYTGINPLVITLGTLYLFGGSALLLSGISGATGYEGIGGFPQALTDFANLTLFGLPMPLMLFLLCVLICWLFMHRTHSGRNIFLIGQSSKVARYAAIPIARTLYLLYTLTGIASAIAAIVLVSYFGSARSDLGASFLMPAITAVVLGGANIYGGSGSIIGTALAILLIGYLQQGLQMAGVPNQVSSALAGALLIIAVVGRSISLHHHQIRDWIQRWRNQRLSS</sequence>
<organism>
    <name type="scientific">Photorhabdus luminescens</name>
    <name type="common">Xenorhabdus luminescens</name>
    <dbReference type="NCBI Taxonomy" id="29488"/>
    <lineage>
        <taxon>Bacteria</taxon>
        <taxon>Pseudomonadati</taxon>
        <taxon>Pseudomonadota</taxon>
        <taxon>Gammaproteobacteria</taxon>
        <taxon>Enterobacterales</taxon>
        <taxon>Morganellaceae</taxon>
        <taxon>Photorhabdus</taxon>
    </lineage>
</organism>
<feature type="chain" id="PRO_0000351370" description="Autoinducer 2 import system permease protein LsrD">
    <location>
        <begin position="1"/>
        <end position="333"/>
    </location>
</feature>
<feature type="transmembrane region" description="Helical" evidence="2">
    <location>
        <begin position="7"/>
        <end position="27"/>
    </location>
</feature>
<feature type="transmembrane region" description="Helical" evidence="2">
    <location>
        <begin position="45"/>
        <end position="65"/>
    </location>
</feature>
<feature type="transmembrane region" description="Helical" evidence="2">
    <location>
        <begin position="70"/>
        <end position="90"/>
    </location>
</feature>
<feature type="transmembrane region" description="Helical" evidence="2">
    <location>
        <begin position="91"/>
        <end position="111"/>
    </location>
</feature>
<feature type="transmembrane region" description="Helical" evidence="2">
    <location>
        <begin position="118"/>
        <end position="138"/>
    </location>
</feature>
<feature type="transmembrane region" description="Helical" evidence="2">
    <location>
        <begin position="162"/>
        <end position="182"/>
    </location>
</feature>
<feature type="transmembrane region" description="Helical" evidence="2">
    <location>
        <begin position="212"/>
        <end position="232"/>
    </location>
</feature>
<feature type="transmembrane region" description="Helical" evidence="2">
    <location>
        <begin position="240"/>
        <end position="260"/>
    </location>
</feature>
<feature type="transmembrane region" description="Helical" evidence="2">
    <location>
        <begin position="261"/>
        <end position="281"/>
    </location>
</feature>
<feature type="transmembrane region" description="Helical" evidence="2">
    <location>
        <begin position="288"/>
        <end position="308"/>
    </location>
</feature>
<comment type="function">
    <text evidence="1">Part of the ABC transporter complex LsrABCD involved in autoinducer 2 (AI-2) import. Probably responsible for the translocation of the substrate across the membrane (By similarity).</text>
</comment>
<comment type="subunit">
    <text evidence="1">The complex is composed of two ATP-binding proteins (LsrA), two transmembrane proteins (LsrC and LsrD) and a solute-binding protein (LsrB).</text>
</comment>
<comment type="subcellular location">
    <subcellularLocation>
        <location evidence="1">Cell inner membrane</location>
        <topology evidence="1">Multi-pass membrane protein</topology>
    </subcellularLocation>
</comment>
<comment type="similarity">
    <text evidence="3">Belongs to the binding-protein-dependent transport system permease family. AraH/RbsC subfamily.</text>
</comment>
<gene>
    <name type="primary">lsrD</name>
</gene>
<evidence type="ECO:0000250" key="1"/>
<evidence type="ECO:0000255" key="2"/>
<evidence type="ECO:0000305" key="3"/>
<protein>
    <recommendedName>
        <fullName>Autoinducer 2 import system permease protein LsrD</fullName>
        <shortName>AI-2 import system permease protein LsrD</shortName>
    </recommendedName>
</protein>
<dbReference type="EMBL" id="AJ967010">
    <property type="protein sequence ID" value="CAI91192.1"/>
    <property type="molecule type" value="Genomic_DNA"/>
</dbReference>
<dbReference type="RefSeq" id="WP_049584343.1">
    <property type="nucleotide sequence ID" value="NZ_FMWJ01000024.1"/>
</dbReference>
<dbReference type="STRING" id="29488.KS18_20645"/>
<dbReference type="GeneID" id="45657231"/>
<dbReference type="OrthoDB" id="192433at2"/>
<dbReference type="GO" id="GO:0005886">
    <property type="term" value="C:plasma membrane"/>
    <property type="evidence" value="ECO:0007669"/>
    <property type="project" value="UniProtKB-SubCell"/>
</dbReference>
<dbReference type="GO" id="GO:0022857">
    <property type="term" value="F:transmembrane transporter activity"/>
    <property type="evidence" value="ECO:0007669"/>
    <property type="project" value="InterPro"/>
</dbReference>
<dbReference type="CDD" id="cd06579">
    <property type="entry name" value="TM_PBP1_transp_AraH_like"/>
    <property type="match status" value="1"/>
</dbReference>
<dbReference type="InterPro" id="IPR001851">
    <property type="entry name" value="ABC_transp_permease"/>
</dbReference>
<dbReference type="NCBIfam" id="NF011612">
    <property type="entry name" value="PRK15038.1"/>
    <property type="match status" value="1"/>
</dbReference>
<dbReference type="PANTHER" id="PTHR32196">
    <property type="entry name" value="ABC TRANSPORTER PERMEASE PROTEIN YPHD-RELATED-RELATED"/>
    <property type="match status" value="1"/>
</dbReference>
<dbReference type="PANTHER" id="PTHR32196:SF71">
    <property type="entry name" value="AUTOINDUCER 2 IMPORT SYSTEM PERMEASE PROTEIN LSRD"/>
    <property type="match status" value="1"/>
</dbReference>
<dbReference type="Pfam" id="PF02653">
    <property type="entry name" value="BPD_transp_2"/>
    <property type="match status" value="1"/>
</dbReference>
<accession>Q2PBL8</accession>
<keyword id="KW-0997">Cell inner membrane</keyword>
<keyword id="KW-1003">Cell membrane</keyword>
<keyword id="KW-0472">Membrane</keyword>
<keyword id="KW-0812">Transmembrane</keyword>
<keyword id="KW-1133">Transmembrane helix</keyword>
<keyword id="KW-0813">Transport</keyword>